<evidence type="ECO:0000250" key="1">
    <source>
        <dbReference type="UniProtKB" id="Q7B8B9"/>
    </source>
</evidence>
<evidence type="ECO:0000269" key="2">
    <source>
    </source>
</evidence>
<evidence type="ECO:0000269" key="3">
    <source>
    </source>
</evidence>
<evidence type="ECO:0000269" key="4">
    <source>
    </source>
</evidence>
<evidence type="ECO:0000269" key="5">
    <source>
    </source>
</evidence>
<evidence type="ECO:0000303" key="6">
    <source>
    </source>
</evidence>
<evidence type="ECO:0000305" key="7"/>
<evidence type="ECO:0000305" key="8">
    <source>
    </source>
</evidence>
<dbReference type="EC" id="3.1.1.-" evidence="8"/>
<dbReference type="EMBL" id="CM000580">
    <property type="protein sequence ID" value="EWG54418.1"/>
    <property type="molecule type" value="Genomic_DNA"/>
</dbReference>
<dbReference type="RefSeq" id="XP_018760609.1">
    <property type="nucleotide sequence ID" value="XM_018901987.1"/>
</dbReference>
<dbReference type="GeneID" id="30070065"/>
<dbReference type="KEGG" id="fvr:FVEG_12637"/>
<dbReference type="VEuPathDB" id="FungiDB:FVEG_12637"/>
<dbReference type="eggNOG" id="ENOG502S1A6">
    <property type="taxonomic scope" value="Eukaryota"/>
</dbReference>
<dbReference type="OrthoDB" id="41897at110618"/>
<dbReference type="Proteomes" id="UP000009096">
    <property type="component" value="Chromosome 3"/>
</dbReference>
<dbReference type="GO" id="GO:0016787">
    <property type="term" value="F:hydrolase activity"/>
    <property type="evidence" value="ECO:0007669"/>
    <property type="project" value="UniProtKB-KW"/>
</dbReference>
<dbReference type="GO" id="GO:0046872">
    <property type="term" value="F:metal ion binding"/>
    <property type="evidence" value="ECO:0007669"/>
    <property type="project" value="UniProtKB-KW"/>
</dbReference>
<dbReference type="GO" id="GO:0044550">
    <property type="term" value="P:secondary metabolite biosynthetic process"/>
    <property type="evidence" value="ECO:0007669"/>
    <property type="project" value="UniProtKB-ARBA"/>
</dbReference>
<dbReference type="CDD" id="cd07730">
    <property type="entry name" value="metallo-hydrolase-like_MBL-fold"/>
    <property type="match status" value="1"/>
</dbReference>
<dbReference type="Gene3D" id="3.60.15.10">
    <property type="entry name" value="Ribonuclease Z/Hydroxyacylglutathione hydrolase-like"/>
    <property type="match status" value="1"/>
</dbReference>
<dbReference type="InterPro" id="IPR051013">
    <property type="entry name" value="MBL_superfamily_lactonases"/>
</dbReference>
<dbReference type="InterPro" id="IPR001279">
    <property type="entry name" value="Metallo-B-lactamas"/>
</dbReference>
<dbReference type="InterPro" id="IPR036866">
    <property type="entry name" value="RibonucZ/Hydroxyglut_hydro"/>
</dbReference>
<dbReference type="PANTHER" id="PTHR42978:SF5">
    <property type="entry name" value="METALLO-BETA-LACTAMASE DOMAIN-CONTAINING PROTEIN"/>
    <property type="match status" value="1"/>
</dbReference>
<dbReference type="PANTHER" id="PTHR42978">
    <property type="entry name" value="QUORUM-QUENCHING LACTONASE YTNP-RELATED-RELATED"/>
    <property type="match status" value="1"/>
</dbReference>
<dbReference type="Pfam" id="PF00753">
    <property type="entry name" value="Lactamase_B"/>
    <property type="match status" value="1"/>
</dbReference>
<dbReference type="SUPFAM" id="SSF56281">
    <property type="entry name" value="Metallo-hydrolase/oxidoreductase"/>
    <property type="match status" value="1"/>
</dbReference>
<gene>
    <name evidence="6" type="primary">MBL2</name>
    <name type="ORF">FVEG_12637</name>
</gene>
<name>MBL2_GIBM7</name>
<accession>W7MSI4</accession>
<sequence>MVFDLGVRKDWENLPETFVAGIKGSGCKIEVQTDVASLLQENGQSLDDVGAVIWSHWHFDHAGDPQTFPGTTDLIVGPGFKSNIIPAYPTVRDSHVNETAWEGRELIEIDFKGDKGLKIGKFDAYDFYGDGSFYLLSSPGHAVGHMSALARTTADPPSFMLLGGDIAHHCGEFRPSPYTPLPEMMSPNPLGRTLSACPGRLFLNIHPWKDPERPFFDPTTEPGWHLEAAEAKQSIDKLI</sequence>
<comment type="function">
    <text evidence="2 3 4 5 8">Gamma-lactamase; part of the Fusarium detoxification of benzoxazolinone cluster 2 (FDB2) involved in the degradation of benzoxazolinones produced by the host plant (PubMed:19302487, PubMed:26808652). Maize, wheat, and rye produce the 2 benzoxazinone phytoanticipins 2,4-dihy-droxy-7-methoxy-1,4-benzoxazin-3-one (DIMBOA) and 2,4-dihydroxy-1,4-benzoxazin-3-one (DIBOA) that, due to their inherent instability once released, spontaneously degrade to the more stable corresponding benzoxazolinones, 6-methoxy-2-benzoxazolinone (MBOA) and 2-benzoxazolinone (BOA), respectively (PubMed:11876429). The first step in the detoxification of benzoxazolinones involves the hydrolysis of the cyclic ester bond of benzoxazolinones by the FDB1 cluster gamma-lactamase MBL1 to aminophenols (PubMed:12788712, PubMed:26808652). MBL1 is able to convert BOA into 2-aminophenol (2-AP), as well as MBOA into 5-methoxy-2-aminophenol (2-AMP) (PubMed:12788712, PubMed:26808652). The FDB2 cluster N-malonyltransferase FDB2/NAT1 then metabolizes aminophenols via N-malonylation to non-toxic malonamic acids (PubMed:12788712, PubMed:19302487). FDB2/NAT1 converts 2-AP into N-(2-hydroxyphenyl) malonamic acid (HPMA) and 2-AMP into N-(2-hydroxy-4-methoxyphenyl) malonamic acid (HMPMA) (PubMed:12788712, PubMed:19302487). The duplicated dienlactone hydrolases DLH1 and DLH2 may provide redundant function for hydrolyzing the lactone moiety in the BOA molecule (Probable). The roles of the amidases and other enzymes encoded by the 2 FDB clusters have not been identified so far (Probable).</text>
</comment>
<comment type="induction">
    <text evidence="5">Expression is induced in response to 2-benzoxasolinone (BOA) exposure.</text>
</comment>
<comment type="disruption phenotype">
    <text evidence="4">Does not affect tolerance to 2-benzoxazolinone (BOA).</text>
</comment>
<comment type="miscellaneous">
    <text evidence="8">Fusarium verticillioides possesses 2 unlinked loci, FDB1 and FDB2, necessary for detoxification of antimicrobial compounds produced by maize, including 2-benzoxazolinone (BOA) (Probable). The FDB2 cluster arose as a duplication of the FDB1 cluster with rearrangement and expansion by incorporating additional genes (Probable).</text>
</comment>
<comment type="similarity">
    <text evidence="7">Belongs to the metallo-beta-lactamase superfamily.</text>
</comment>
<protein>
    <recommendedName>
        <fullName evidence="7">Gamma-lactamase MBL2</fullName>
        <ecNumber evidence="8">3.1.1.-</ecNumber>
    </recommendedName>
    <alternativeName>
        <fullName evidence="6">Fusarium detoxification of benzoxazolinone cluster 2 protein MBL2</fullName>
        <shortName evidence="6">FDB2 cluster protein MBL2</shortName>
    </alternativeName>
    <alternativeName>
        <fullName evidence="6">Metallo-beta-lactamase 2</fullName>
    </alternativeName>
</protein>
<proteinExistence type="evidence at transcript level"/>
<reference key="1">
    <citation type="journal article" date="2010" name="Nature">
        <title>Comparative genomics reveals mobile pathogenicity chromosomes in Fusarium.</title>
        <authorList>
            <person name="Ma L.-J."/>
            <person name="van der Does H.C."/>
            <person name="Borkovich K.A."/>
            <person name="Coleman J.J."/>
            <person name="Daboussi M.-J."/>
            <person name="Di Pietro A."/>
            <person name="Dufresne M."/>
            <person name="Freitag M."/>
            <person name="Grabherr M."/>
            <person name="Henrissat B."/>
            <person name="Houterman P.M."/>
            <person name="Kang S."/>
            <person name="Shim W.-B."/>
            <person name="Woloshuk C."/>
            <person name="Xie X."/>
            <person name="Xu J.-R."/>
            <person name="Antoniw J."/>
            <person name="Baker S.E."/>
            <person name="Bluhm B.H."/>
            <person name="Breakspear A."/>
            <person name="Brown D.W."/>
            <person name="Butchko R.A.E."/>
            <person name="Chapman S."/>
            <person name="Coulson R."/>
            <person name="Coutinho P.M."/>
            <person name="Danchin E.G.J."/>
            <person name="Diener A."/>
            <person name="Gale L.R."/>
            <person name="Gardiner D.M."/>
            <person name="Goff S."/>
            <person name="Hammond-Kosack K.E."/>
            <person name="Hilburn K."/>
            <person name="Hua-Van A."/>
            <person name="Jonkers W."/>
            <person name="Kazan K."/>
            <person name="Kodira C.D."/>
            <person name="Koehrsen M."/>
            <person name="Kumar L."/>
            <person name="Lee Y.-H."/>
            <person name="Li L."/>
            <person name="Manners J.M."/>
            <person name="Miranda-Saavedra D."/>
            <person name="Mukherjee M."/>
            <person name="Park G."/>
            <person name="Park J."/>
            <person name="Park S.-Y."/>
            <person name="Proctor R.H."/>
            <person name="Regev A."/>
            <person name="Ruiz-Roldan M.C."/>
            <person name="Sain D."/>
            <person name="Sakthikumar S."/>
            <person name="Sykes S."/>
            <person name="Schwartz D.C."/>
            <person name="Turgeon B.G."/>
            <person name="Wapinski I."/>
            <person name="Yoder O."/>
            <person name="Young S."/>
            <person name="Zeng Q."/>
            <person name="Zhou S."/>
            <person name="Galagan J."/>
            <person name="Cuomo C.A."/>
            <person name="Kistler H.C."/>
            <person name="Rep M."/>
        </authorList>
    </citation>
    <scope>NUCLEOTIDE SEQUENCE [LARGE SCALE GENOMIC DNA]</scope>
    <source>
        <strain>M3125 / FGSC 7600</strain>
    </source>
</reference>
<reference key="2">
    <citation type="journal article" date="2002" name="Mol. Plant Microbe Interact.">
        <title>Fdb1 and Fdb2, Fusarium verticillioides loci necessary for detoxification of preformed antimicrobials from corn.</title>
        <authorList>
            <person name="Glenn A.E."/>
            <person name="Gold S.E."/>
            <person name="Bacon C.W."/>
        </authorList>
    </citation>
    <scope>FUNCTION</scope>
</reference>
<reference key="3">
    <citation type="journal article" date="2003" name="Appl. Environ. Microbiol.">
        <title>Identification of intermediate and branch metabolites resulting from biotransformation of 2-benzoxazolinone by Fusarium verticillioides.</title>
        <authorList>
            <person name="Glenn A.E."/>
            <person name="Meredith F.I."/>
            <person name="Morrison W.H. III"/>
            <person name="Bacon C.W."/>
        </authorList>
    </citation>
    <scope>FUNCTION</scope>
</reference>
<reference key="4">
    <citation type="journal article" date="2009" name="J. Appl. Microbiol.">
        <title>FDB2 encodes a member of the arylamine N-acetyltransferase family and is necessary for biotransformation of benzoxazolinones by Fusarium verticillioides.</title>
        <authorList>
            <person name="Glenn A.E."/>
            <person name="Bacon C.W."/>
        </authorList>
    </citation>
    <scope>FUNCTION</scope>
    <scope>DISRUPTION PHENOTYPE</scope>
</reference>
<reference key="5">
    <citation type="journal article" date="2016" name="PLoS ONE">
        <title>Two horizontally transferred xenobiotic resistance gene clusters associated with detoxification of benzoxazolinones by Fusarium species.</title>
        <authorList>
            <person name="Glenn A.E."/>
            <person name="Davis C.B."/>
            <person name="Gao M."/>
            <person name="Gold S.E."/>
            <person name="Mitchell T.R."/>
            <person name="Proctor R.H."/>
            <person name="Stewart J.E."/>
            <person name="Snook M.E."/>
        </authorList>
    </citation>
    <scope>FUNCTION</scope>
    <scope>INDUCTION</scope>
</reference>
<feature type="chain" id="PRO_0000454593" description="Gamma-lactamase MBL2">
    <location>
        <begin position="1"/>
        <end position="239"/>
    </location>
</feature>
<feature type="binding site" evidence="1">
    <location>
        <position position="56"/>
    </location>
    <ligand>
        <name>Zn(2+)</name>
        <dbReference type="ChEBI" id="CHEBI:29105"/>
        <label>1</label>
    </ligand>
</feature>
<feature type="binding site" evidence="1">
    <location>
        <position position="58"/>
    </location>
    <ligand>
        <name>Zn(2+)</name>
        <dbReference type="ChEBI" id="CHEBI:29105"/>
        <label>1</label>
    </ligand>
</feature>
<feature type="binding site" evidence="1">
    <location>
        <position position="60"/>
    </location>
    <ligand>
        <name>Zn(2+)</name>
        <dbReference type="ChEBI" id="CHEBI:29105"/>
        <label>2</label>
    </ligand>
</feature>
<feature type="binding site" evidence="1">
    <location>
        <position position="61"/>
    </location>
    <ligand>
        <name>Zn(2+)</name>
        <dbReference type="ChEBI" id="CHEBI:29105"/>
        <label>2</label>
    </ligand>
</feature>
<feature type="binding site" evidence="1">
    <location>
        <position position="141"/>
    </location>
    <ligand>
        <name>Zn(2+)</name>
        <dbReference type="ChEBI" id="CHEBI:29105"/>
        <label>1</label>
    </ligand>
</feature>
<feature type="binding site" evidence="1">
    <location>
        <position position="165"/>
    </location>
    <ligand>
        <name>Zn(2+)</name>
        <dbReference type="ChEBI" id="CHEBI:29105"/>
        <label>1</label>
    </ligand>
</feature>
<feature type="binding site" evidence="1">
    <location>
        <position position="165"/>
    </location>
    <ligand>
        <name>Zn(2+)</name>
        <dbReference type="ChEBI" id="CHEBI:29105"/>
        <label>2</label>
    </ligand>
</feature>
<keyword id="KW-0378">Hydrolase</keyword>
<keyword id="KW-0479">Metal-binding</keyword>
<keyword id="KW-1185">Reference proteome</keyword>
<keyword id="KW-0862">Zinc</keyword>
<organism>
    <name type="scientific">Gibberella moniliformis (strain M3125 / FGSC 7600)</name>
    <name type="common">Maize ear and stalk rot fungus</name>
    <name type="synonym">Fusarium verticillioides</name>
    <dbReference type="NCBI Taxonomy" id="334819"/>
    <lineage>
        <taxon>Eukaryota</taxon>
        <taxon>Fungi</taxon>
        <taxon>Dikarya</taxon>
        <taxon>Ascomycota</taxon>
        <taxon>Pezizomycotina</taxon>
        <taxon>Sordariomycetes</taxon>
        <taxon>Hypocreomycetidae</taxon>
        <taxon>Hypocreales</taxon>
        <taxon>Nectriaceae</taxon>
        <taxon>Fusarium</taxon>
        <taxon>Fusarium fujikuroi species complex</taxon>
    </lineage>
</organism>